<name>PYRD_CLASE</name>
<accession>B0RIK6</accession>
<comment type="function">
    <text evidence="1">Catalyzes the conversion of dihydroorotate to orotate with quinone as electron acceptor.</text>
</comment>
<comment type="catalytic activity">
    <reaction evidence="1">
        <text>(S)-dihydroorotate + a quinone = orotate + a quinol</text>
        <dbReference type="Rhea" id="RHEA:30187"/>
        <dbReference type="ChEBI" id="CHEBI:24646"/>
        <dbReference type="ChEBI" id="CHEBI:30839"/>
        <dbReference type="ChEBI" id="CHEBI:30864"/>
        <dbReference type="ChEBI" id="CHEBI:132124"/>
        <dbReference type="EC" id="1.3.5.2"/>
    </reaction>
</comment>
<comment type="cofactor">
    <cofactor evidence="1">
        <name>FMN</name>
        <dbReference type="ChEBI" id="CHEBI:58210"/>
    </cofactor>
    <text evidence="1">Binds 1 FMN per subunit.</text>
</comment>
<comment type="pathway">
    <text evidence="1">Pyrimidine metabolism; UMP biosynthesis via de novo pathway; orotate from (S)-dihydroorotate (quinone route): step 1/1.</text>
</comment>
<comment type="subunit">
    <text evidence="1">Monomer.</text>
</comment>
<comment type="subcellular location">
    <subcellularLocation>
        <location evidence="1">Cell membrane</location>
        <topology evidence="1">Peripheral membrane protein</topology>
    </subcellularLocation>
</comment>
<comment type="similarity">
    <text evidence="1">Belongs to the dihydroorotate dehydrogenase family. Type 2 subfamily.</text>
</comment>
<comment type="sequence caution" evidence="2">
    <conflict type="erroneous initiation">
        <sequence resource="EMBL-CDS" id="CAQ01497"/>
    </conflict>
</comment>
<protein>
    <recommendedName>
        <fullName evidence="1">Dihydroorotate dehydrogenase (quinone)</fullName>
        <ecNumber evidence="1">1.3.5.2</ecNumber>
    </recommendedName>
    <alternativeName>
        <fullName evidence="1">DHOdehase</fullName>
        <shortName evidence="1">DHOD</shortName>
        <shortName evidence="1">DHODase</shortName>
    </alternativeName>
    <alternativeName>
        <fullName evidence="1">Dihydroorotate oxidase</fullName>
    </alternativeName>
</protein>
<proteinExistence type="inferred from homology"/>
<dbReference type="EC" id="1.3.5.2" evidence="1"/>
<dbReference type="EMBL" id="AM849034">
    <property type="protein sequence ID" value="CAQ01497.1"/>
    <property type="status" value="ALT_INIT"/>
    <property type="molecule type" value="Genomic_DNA"/>
</dbReference>
<dbReference type="RefSeq" id="WP_041464496.1">
    <property type="nucleotide sequence ID" value="NZ_MZMN01000003.1"/>
</dbReference>
<dbReference type="SMR" id="B0RIK6"/>
<dbReference type="STRING" id="31964.CMS1386"/>
<dbReference type="KEGG" id="cms:CMS1386"/>
<dbReference type="eggNOG" id="COG0167">
    <property type="taxonomic scope" value="Bacteria"/>
</dbReference>
<dbReference type="HOGENOM" id="CLU_013640_2_0_11"/>
<dbReference type="OrthoDB" id="9802377at2"/>
<dbReference type="UniPathway" id="UPA00070">
    <property type="reaction ID" value="UER00946"/>
</dbReference>
<dbReference type="Proteomes" id="UP000001318">
    <property type="component" value="Chromosome"/>
</dbReference>
<dbReference type="GO" id="GO:0005737">
    <property type="term" value="C:cytoplasm"/>
    <property type="evidence" value="ECO:0007669"/>
    <property type="project" value="InterPro"/>
</dbReference>
<dbReference type="GO" id="GO:0005886">
    <property type="term" value="C:plasma membrane"/>
    <property type="evidence" value="ECO:0007669"/>
    <property type="project" value="UniProtKB-SubCell"/>
</dbReference>
<dbReference type="GO" id="GO:0106430">
    <property type="term" value="F:dihydroorotate dehydrogenase (quinone) activity"/>
    <property type="evidence" value="ECO:0007669"/>
    <property type="project" value="UniProtKB-EC"/>
</dbReference>
<dbReference type="GO" id="GO:0006207">
    <property type="term" value="P:'de novo' pyrimidine nucleobase biosynthetic process"/>
    <property type="evidence" value="ECO:0007669"/>
    <property type="project" value="InterPro"/>
</dbReference>
<dbReference type="GO" id="GO:0044205">
    <property type="term" value="P:'de novo' UMP biosynthetic process"/>
    <property type="evidence" value="ECO:0007669"/>
    <property type="project" value="UniProtKB-UniRule"/>
</dbReference>
<dbReference type="CDD" id="cd04738">
    <property type="entry name" value="DHOD_2_like"/>
    <property type="match status" value="1"/>
</dbReference>
<dbReference type="Gene3D" id="3.20.20.70">
    <property type="entry name" value="Aldolase class I"/>
    <property type="match status" value="1"/>
</dbReference>
<dbReference type="HAMAP" id="MF_00225">
    <property type="entry name" value="DHO_dh_type2"/>
    <property type="match status" value="1"/>
</dbReference>
<dbReference type="InterPro" id="IPR013785">
    <property type="entry name" value="Aldolase_TIM"/>
</dbReference>
<dbReference type="InterPro" id="IPR050074">
    <property type="entry name" value="DHO_dehydrogenase"/>
</dbReference>
<dbReference type="InterPro" id="IPR012135">
    <property type="entry name" value="Dihydroorotate_DH_1_2"/>
</dbReference>
<dbReference type="InterPro" id="IPR005719">
    <property type="entry name" value="Dihydroorotate_DH_2"/>
</dbReference>
<dbReference type="InterPro" id="IPR005720">
    <property type="entry name" value="Dihydroorotate_DH_cat"/>
</dbReference>
<dbReference type="InterPro" id="IPR001295">
    <property type="entry name" value="Dihydroorotate_DH_CS"/>
</dbReference>
<dbReference type="NCBIfam" id="NF003648">
    <property type="entry name" value="PRK05286.2-1"/>
    <property type="match status" value="1"/>
</dbReference>
<dbReference type="NCBIfam" id="NF003652">
    <property type="entry name" value="PRK05286.2-5"/>
    <property type="match status" value="1"/>
</dbReference>
<dbReference type="NCBIfam" id="TIGR01036">
    <property type="entry name" value="pyrD_sub2"/>
    <property type="match status" value="1"/>
</dbReference>
<dbReference type="PANTHER" id="PTHR48109:SF4">
    <property type="entry name" value="DIHYDROOROTATE DEHYDROGENASE (QUINONE), MITOCHONDRIAL"/>
    <property type="match status" value="1"/>
</dbReference>
<dbReference type="PANTHER" id="PTHR48109">
    <property type="entry name" value="DIHYDROOROTATE DEHYDROGENASE (QUINONE), MITOCHONDRIAL-RELATED"/>
    <property type="match status" value="1"/>
</dbReference>
<dbReference type="Pfam" id="PF01180">
    <property type="entry name" value="DHO_dh"/>
    <property type="match status" value="1"/>
</dbReference>
<dbReference type="PIRSF" id="PIRSF000164">
    <property type="entry name" value="DHO_oxidase"/>
    <property type="match status" value="1"/>
</dbReference>
<dbReference type="SUPFAM" id="SSF51395">
    <property type="entry name" value="FMN-linked oxidoreductases"/>
    <property type="match status" value="1"/>
</dbReference>
<dbReference type="PROSITE" id="PS00911">
    <property type="entry name" value="DHODEHASE_1"/>
    <property type="match status" value="1"/>
</dbReference>
<dbReference type="PROSITE" id="PS00912">
    <property type="entry name" value="DHODEHASE_2"/>
    <property type="match status" value="1"/>
</dbReference>
<sequence>MYPLLFRTVLSRMDPEDAHHLASTAISLLPPSGLGWIARRLTAPDPSLAVDTLGLRFPSPFGVAAGFDKDARAVLGLGQLGFGHVEVGTVTAEAQPGNPRPRLFRLIEDRAVINRMGFNNGGAAALADRLRRLRTRRDRPVIGVNIGKTRVVAVEDAVADYVRTTRLVAPVADYLAVNVSSPNTPGLRGLQEIDLLRPLLTSIRDAADGVPVLVKIAPDLQDAEVERIAELATELGLAGVIATNTTLSRADLRTDAAVVEAAGAGGLSGAPLAPRALEVLRILRRVLPSDACIISVGGVDTADDVQSRLDAGATLVQGYTAFLYRGPLWARSINAGLARIRRPR</sequence>
<feature type="chain" id="PRO_0000336463" description="Dihydroorotate dehydrogenase (quinone)">
    <location>
        <begin position="1"/>
        <end position="344"/>
    </location>
</feature>
<feature type="active site" description="Nucleophile" evidence="1">
    <location>
        <position position="181"/>
    </location>
</feature>
<feature type="binding site" evidence="1">
    <location>
        <begin position="65"/>
        <end position="69"/>
    </location>
    <ligand>
        <name>FMN</name>
        <dbReference type="ChEBI" id="CHEBI:58210"/>
    </ligand>
</feature>
<feature type="binding site" evidence="1">
    <location>
        <position position="69"/>
    </location>
    <ligand>
        <name>substrate</name>
    </ligand>
</feature>
<feature type="binding site" evidence="1">
    <location>
        <position position="89"/>
    </location>
    <ligand>
        <name>FMN</name>
        <dbReference type="ChEBI" id="CHEBI:58210"/>
    </ligand>
</feature>
<feature type="binding site" evidence="1">
    <location>
        <begin position="114"/>
        <end position="118"/>
    </location>
    <ligand>
        <name>substrate</name>
    </ligand>
</feature>
<feature type="binding site" evidence="1">
    <location>
        <position position="145"/>
    </location>
    <ligand>
        <name>FMN</name>
        <dbReference type="ChEBI" id="CHEBI:58210"/>
    </ligand>
</feature>
<feature type="binding site" evidence="1">
    <location>
        <position position="178"/>
    </location>
    <ligand>
        <name>FMN</name>
        <dbReference type="ChEBI" id="CHEBI:58210"/>
    </ligand>
</feature>
<feature type="binding site" evidence="1">
    <location>
        <position position="178"/>
    </location>
    <ligand>
        <name>substrate</name>
    </ligand>
</feature>
<feature type="binding site" evidence="1">
    <location>
        <position position="183"/>
    </location>
    <ligand>
        <name>substrate</name>
    </ligand>
</feature>
<feature type="binding site" evidence="1">
    <location>
        <position position="215"/>
    </location>
    <ligand>
        <name>FMN</name>
        <dbReference type="ChEBI" id="CHEBI:58210"/>
    </ligand>
</feature>
<feature type="binding site" evidence="1">
    <location>
        <position position="243"/>
    </location>
    <ligand>
        <name>FMN</name>
        <dbReference type="ChEBI" id="CHEBI:58210"/>
    </ligand>
</feature>
<feature type="binding site" evidence="1">
    <location>
        <begin position="244"/>
        <end position="245"/>
    </location>
    <ligand>
        <name>substrate</name>
    </ligand>
</feature>
<feature type="binding site" evidence="1">
    <location>
        <position position="269"/>
    </location>
    <ligand>
        <name>FMN</name>
        <dbReference type="ChEBI" id="CHEBI:58210"/>
    </ligand>
</feature>
<feature type="binding site" evidence="1">
    <location>
        <position position="298"/>
    </location>
    <ligand>
        <name>FMN</name>
        <dbReference type="ChEBI" id="CHEBI:58210"/>
    </ligand>
</feature>
<feature type="binding site" evidence="1">
    <location>
        <begin position="319"/>
        <end position="320"/>
    </location>
    <ligand>
        <name>FMN</name>
        <dbReference type="ChEBI" id="CHEBI:58210"/>
    </ligand>
</feature>
<evidence type="ECO:0000255" key="1">
    <source>
        <dbReference type="HAMAP-Rule" id="MF_00225"/>
    </source>
</evidence>
<evidence type="ECO:0000305" key="2"/>
<keyword id="KW-1003">Cell membrane</keyword>
<keyword id="KW-0285">Flavoprotein</keyword>
<keyword id="KW-0288">FMN</keyword>
<keyword id="KW-0472">Membrane</keyword>
<keyword id="KW-0560">Oxidoreductase</keyword>
<keyword id="KW-0665">Pyrimidine biosynthesis</keyword>
<reference key="1">
    <citation type="journal article" date="2008" name="J. Bacteriol.">
        <title>Genome of the actinomycete plant pathogen Clavibacter michiganensis subsp. sepedonicus suggests recent niche adaptation.</title>
        <authorList>
            <person name="Bentley S.D."/>
            <person name="Corton C."/>
            <person name="Brown S.E."/>
            <person name="Barron A."/>
            <person name="Clark L."/>
            <person name="Doggett J."/>
            <person name="Harris B."/>
            <person name="Ormond D."/>
            <person name="Quail M.A."/>
            <person name="May G."/>
            <person name="Francis D."/>
            <person name="Knudson D."/>
            <person name="Parkhill J."/>
            <person name="Ishimaru C.A."/>
        </authorList>
    </citation>
    <scope>NUCLEOTIDE SEQUENCE [LARGE SCALE GENOMIC DNA]</scope>
    <source>
        <strain>ATCC 33113 / DSM 20744 / JCM 9667 / LMG 2889 / ICMP 2535 / C-1</strain>
    </source>
</reference>
<gene>
    <name evidence="1" type="primary">pyrD</name>
    <name type="ordered locus">CMS1386</name>
</gene>
<organism>
    <name type="scientific">Clavibacter sepedonicus</name>
    <name type="common">Clavibacter michiganensis subsp. sepedonicus</name>
    <dbReference type="NCBI Taxonomy" id="31964"/>
    <lineage>
        <taxon>Bacteria</taxon>
        <taxon>Bacillati</taxon>
        <taxon>Actinomycetota</taxon>
        <taxon>Actinomycetes</taxon>
        <taxon>Micrococcales</taxon>
        <taxon>Microbacteriaceae</taxon>
        <taxon>Clavibacter</taxon>
    </lineage>
</organism>